<reference key="1">
    <citation type="journal article" date="1997" name="Proc. Natl. Acad. Sci. U.S.A.">
        <title>Group I allergens of grass pollen as cell wall-loosening agents.</title>
        <authorList>
            <person name="Cosgrove D.J."/>
            <person name="Bedinger P.A."/>
            <person name="Durachko D.M."/>
        </authorList>
    </citation>
    <scope>NUCLEOTIDE SEQUENCE [MRNA]</scope>
</reference>
<reference key="2">
    <citation type="journal article" date="2001" name="Plant Physiol.">
        <title>Expression of beta-expansins is correlated with internodal elongation in deepwater rice.</title>
        <authorList>
            <person name="Lee Y."/>
            <person name="Kende H."/>
        </authorList>
    </citation>
    <scope>NUCLEOTIDE SEQUENCE [GENOMIC DNA]</scope>
</reference>
<reference key="3">
    <citation type="journal article" date="2002" name="Nature">
        <title>Sequence and analysis of rice chromosome 4.</title>
        <authorList>
            <person name="Feng Q."/>
            <person name="Zhang Y."/>
            <person name="Hao P."/>
            <person name="Wang S."/>
            <person name="Fu G."/>
            <person name="Huang Y."/>
            <person name="Li Y."/>
            <person name="Zhu J."/>
            <person name="Liu Y."/>
            <person name="Hu X."/>
            <person name="Jia P."/>
            <person name="Zhang Y."/>
            <person name="Zhao Q."/>
            <person name="Ying K."/>
            <person name="Yu S."/>
            <person name="Tang Y."/>
            <person name="Weng Q."/>
            <person name="Zhang L."/>
            <person name="Lu Y."/>
            <person name="Mu J."/>
            <person name="Lu Y."/>
            <person name="Zhang L.S."/>
            <person name="Yu Z."/>
            <person name="Fan D."/>
            <person name="Liu X."/>
            <person name="Lu T."/>
            <person name="Li C."/>
            <person name="Wu Y."/>
            <person name="Sun T."/>
            <person name="Lei H."/>
            <person name="Li T."/>
            <person name="Hu H."/>
            <person name="Guan J."/>
            <person name="Wu M."/>
            <person name="Zhang R."/>
            <person name="Zhou B."/>
            <person name="Chen Z."/>
            <person name="Chen L."/>
            <person name="Jin Z."/>
            <person name="Wang R."/>
            <person name="Yin H."/>
            <person name="Cai Z."/>
            <person name="Ren S."/>
            <person name="Lv G."/>
            <person name="Gu W."/>
            <person name="Zhu G."/>
            <person name="Tu Y."/>
            <person name="Jia J."/>
            <person name="Zhang Y."/>
            <person name="Chen J."/>
            <person name="Kang H."/>
            <person name="Chen X."/>
            <person name="Shao C."/>
            <person name="Sun Y."/>
            <person name="Hu Q."/>
            <person name="Zhang X."/>
            <person name="Zhang W."/>
            <person name="Wang L."/>
            <person name="Ding C."/>
            <person name="Sheng H."/>
            <person name="Gu J."/>
            <person name="Chen S."/>
            <person name="Ni L."/>
            <person name="Zhu F."/>
            <person name="Chen W."/>
            <person name="Lan L."/>
            <person name="Lai Y."/>
            <person name="Cheng Z."/>
            <person name="Gu M."/>
            <person name="Jiang J."/>
            <person name="Li J."/>
            <person name="Hong G."/>
            <person name="Xue Y."/>
            <person name="Han B."/>
        </authorList>
    </citation>
    <scope>NUCLEOTIDE SEQUENCE [LARGE SCALE GENOMIC DNA]</scope>
    <source>
        <strain>cv. Nipponbare</strain>
    </source>
</reference>
<reference key="4">
    <citation type="journal article" date="2005" name="Nature">
        <title>The map-based sequence of the rice genome.</title>
        <authorList>
            <consortium name="International rice genome sequencing project (IRGSP)"/>
        </authorList>
    </citation>
    <scope>NUCLEOTIDE SEQUENCE [LARGE SCALE GENOMIC DNA]</scope>
    <source>
        <strain>cv. Nipponbare</strain>
    </source>
</reference>
<reference key="5">
    <citation type="journal article" date="2008" name="Nucleic Acids Res.">
        <title>The rice annotation project database (RAP-DB): 2008 update.</title>
        <authorList>
            <consortium name="The rice annotation project (RAP)"/>
        </authorList>
    </citation>
    <scope>GENOME REANNOTATION</scope>
    <source>
        <strain>cv. Nipponbare</strain>
    </source>
</reference>
<reference key="6">
    <citation type="journal article" date="2013" name="Rice">
        <title>Improvement of the Oryza sativa Nipponbare reference genome using next generation sequence and optical map data.</title>
        <authorList>
            <person name="Kawahara Y."/>
            <person name="de la Bastide M."/>
            <person name="Hamilton J.P."/>
            <person name="Kanamori H."/>
            <person name="McCombie W.R."/>
            <person name="Ouyang S."/>
            <person name="Schwartz D.C."/>
            <person name="Tanaka T."/>
            <person name="Wu J."/>
            <person name="Zhou S."/>
            <person name="Childs K.L."/>
            <person name="Davidson R.M."/>
            <person name="Lin H."/>
            <person name="Quesada-Ocampo L."/>
            <person name="Vaillancourt B."/>
            <person name="Sakai H."/>
            <person name="Lee S.S."/>
            <person name="Kim J."/>
            <person name="Numa H."/>
            <person name="Itoh T."/>
            <person name="Buell C.R."/>
            <person name="Matsumoto T."/>
        </authorList>
    </citation>
    <scope>GENOME REANNOTATION</scope>
    <source>
        <strain>cv. Nipponbare</strain>
    </source>
</reference>
<reference key="7">
    <citation type="journal article" date="2004" name="Plant Mol. Biol.">
        <title>Nomenclature for members of the expansin superfamily of genes and proteins.</title>
        <authorList>
            <person name="Kende H."/>
            <person name="Bradford K.J."/>
            <person name="Brummell D.A."/>
            <person name="Cho H.-T."/>
            <person name="Cosgrove D.J."/>
            <person name="Fleming A.J."/>
            <person name="Gehring C."/>
            <person name="Lee Y."/>
            <person name="McQueen-Mason S.J."/>
            <person name="Rose J.K.C."/>
            <person name="Voesenek L.A.C."/>
        </authorList>
    </citation>
    <scope>NOMENCLATURE</scope>
</reference>
<organism>
    <name type="scientific">Oryza sativa subsp. japonica</name>
    <name type="common">Rice</name>
    <dbReference type="NCBI Taxonomy" id="39947"/>
    <lineage>
        <taxon>Eukaryota</taxon>
        <taxon>Viridiplantae</taxon>
        <taxon>Streptophyta</taxon>
        <taxon>Embryophyta</taxon>
        <taxon>Tracheophyta</taxon>
        <taxon>Spermatophyta</taxon>
        <taxon>Magnoliopsida</taxon>
        <taxon>Liliopsida</taxon>
        <taxon>Poales</taxon>
        <taxon>Poaceae</taxon>
        <taxon>BOP clade</taxon>
        <taxon>Oryzoideae</taxon>
        <taxon>Oryzeae</taxon>
        <taxon>Oryzinae</taxon>
        <taxon>Oryza</taxon>
        <taxon>Oryza sativa</taxon>
    </lineage>
</organism>
<protein>
    <recommendedName>
        <fullName>Expansin-B5</fullName>
    </recommendedName>
    <alternativeName>
        <fullName>Beta-expansin-5</fullName>
    </alternativeName>
    <alternativeName>
        <fullName>OsEXPB5</fullName>
    </alternativeName>
    <alternativeName>
        <fullName>OsaEXPb1.19</fullName>
    </alternativeName>
</protein>
<sequence>MVSRGTFVFAVLVALPILSLPVSGYEQNYTAGRRSTMSLGRGYGWSSGGATWYGGPQGDGSEGGACGYQSAVGQRPFSSMIAAGGPSLFKNGKGCGSCYQIKCTGNRACSGRPVTVVITDSCPGGVCLNEAAHFDMSGTAFGAMANRGMGDRLRSAGVLKIQYKRVPCRFAMNVAFKVDAGSNPYYLAILVQYANGDGDLAAVHIMEARGGGGWKAMQQSWGATWRLNSNTGKPLSPPFSIRLTSGSGKVLVANNVIPSGWQAGLTYRSTVNYAA</sequence>
<proteinExistence type="evidence at transcript level"/>
<evidence type="ECO:0000250" key="1"/>
<evidence type="ECO:0000255" key="2"/>
<evidence type="ECO:0000255" key="3">
    <source>
        <dbReference type="PROSITE-ProRule" id="PRU00078"/>
    </source>
</evidence>
<evidence type="ECO:0000255" key="4">
    <source>
        <dbReference type="PROSITE-ProRule" id="PRU00079"/>
    </source>
</evidence>
<evidence type="ECO:0000305" key="5"/>
<name>EXPB5_ORYSJ</name>
<accession>Q7XT39</accession>
<accession>A0A0P0WD85</accession>
<accession>Q941N3</accession>
<accession>Q9LD09</accession>
<keyword id="KW-0134">Cell wall</keyword>
<keyword id="KW-0961">Cell wall biogenesis/degradation</keyword>
<keyword id="KW-1015">Disulfide bond</keyword>
<keyword id="KW-0325">Glycoprotein</keyword>
<keyword id="KW-0472">Membrane</keyword>
<keyword id="KW-1185">Reference proteome</keyword>
<keyword id="KW-0964">Secreted</keyword>
<keyword id="KW-0732">Signal</keyword>
<feature type="signal peptide" evidence="2">
    <location>
        <begin position="1"/>
        <end position="24"/>
    </location>
</feature>
<feature type="chain" id="PRO_0000252016" description="Expansin-B5">
    <location>
        <begin position="25"/>
        <end position="275"/>
    </location>
</feature>
<feature type="domain" description="Expansin-like EG45" evidence="4">
    <location>
        <begin position="63"/>
        <end position="173"/>
    </location>
</feature>
<feature type="domain" description="Expansin-like CBD" evidence="3">
    <location>
        <begin position="185"/>
        <end position="269"/>
    </location>
</feature>
<feature type="glycosylation site" description="N-linked (GlcNAc...) asparagine" evidence="2">
    <location>
        <position position="28"/>
    </location>
</feature>
<feature type="disulfide bond" evidence="4">
    <location>
        <begin position="66"/>
        <end position="95"/>
    </location>
</feature>
<feature type="disulfide bond" evidence="4">
    <location>
        <begin position="98"/>
        <end position="168"/>
    </location>
</feature>
<feature type="disulfide bond" evidence="4">
    <location>
        <begin position="103"/>
        <end position="109"/>
    </location>
</feature>
<feature type="sequence conflict" description="In Ref. 1; AAF72986." evidence="5" ref="1">
    <original>E</original>
    <variation>K</variation>
    <location>
        <position position="207"/>
    </location>
</feature>
<comment type="function">
    <text evidence="1">May cause loosening and extension of plant cell walls by disrupting non-covalent bonding between cellulose microfibrils and matrix glucans. No enzymatic activity has been found. May be required for rapid internodal elongation in deepwater rice during submergence (By similarity).</text>
</comment>
<comment type="subcellular location">
    <subcellularLocation>
        <location evidence="1">Secreted</location>
        <location evidence="1">Cell wall</location>
    </subcellularLocation>
    <subcellularLocation>
        <location evidence="1">Membrane</location>
        <topology evidence="1">Peripheral membrane protein</topology>
    </subcellularLocation>
</comment>
<comment type="similarity">
    <text evidence="5">Belongs to the expansin family. Expansin B subfamily.</text>
</comment>
<comment type="online information" name="EXPANSIN homepage">
    <link uri="https://www.dept.psu.edu/biology/groups/expansins/index.htm"/>
</comment>
<dbReference type="EMBL" id="AF261273">
    <property type="protein sequence ID" value="AAF72986.1"/>
    <property type="molecule type" value="mRNA"/>
</dbReference>
<dbReference type="EMBL" id="AY039024">
    <property type="protein sequence ID" value="AAK84683.1"/>
    <property type="molecule type" value="Genomic_DNA"/>
</dbReference>
<dbReference type="EMBL" id="AL606633">
    <property type="protein sequence ID" value="CAE01688.2"/>
    <property type="molecule type" value="Genomic_DNA"/>
</dbReference>
<dbReference type="EMBL" id="AP008210">
    <property type="protein sequence ID" value="BAF15416.1"/>
    <property type="molecule type" value="Genomic_DNA"/>
</dbReference>
<dbReference type="EMBL" id="AP014960">
    <property type="protein sequence ID" value="BAS90391.1"/>
    <property type="molecule type" value="Genomic_DNA"/>
</dbReference>
<dbReference type="RefSeq" id="XP_015635052.1">
    <property type="nucleotide sequence ID" value="XM_015779566.1"/>
</dbReference>
<dbReference type="SMR" id="Q7XT39"/>
<dbReference type="FunCoup" id="Q7XT39">
    <property type="interactions" value="8"/>
</dbReference>
<dbReference type="STRING" id="39947.Q7XT39"/>
<dbReference type="GlyCosmos" id="Q7XT39">
    <property type="glycosylation" value="1 site, No reported glycans"/>
</dbReference>
<dbReference type="PaxDb" id="39947-Q7XT39"/>
<dbReference type="EnsemblPlants" id="Os04t0552200-01">
    <property type="protein sequence ID" value="Os04t0552200-01"/>
    <property type="gene ID" value="Os04g0552200"/>
</dbReference>
<dbReference type="Gramene" id="Os04t0552200-01">
    <property type="protein sequence ID" value="Os04t0552200-01"/>
    <property type="gene ID" value="Os04g0552200"/>
</dbReference>
<dbReference type="KEGG" id="dosa:Os04g0552200"/>
<dbReference type="eggNOG" id="ENOG502QPVQ">
    <property type="taxonomic scope" value="Eukaryota"/>
</dbReference>
<dbReference type="HOGENOM" id="CLU_027462_1_2_1"/>
<dbReference type="InParanoid" id="Q7XT39"/>
<dbReference type="OMA" id="VHIMQQG"/>
<dbReference type="OrthoDB" id="406505at2759"/>
<dbReference type="Proteomes" id="UP000000763">
    <property type="component" value="Chromosome 4"/>
</dbReference>
<dbReference type="Proteomes" id="UP000059680">
    <property type="component" value="Chromosome 4"/>
</dbReference>
<dbReference type="GO" id="GO:0005576">
    <property type="term" value="C:extracellular region"/>
    <property type="evidence" value="ECO:0007669"/>
    <property type="project" value="UniProtKB-KW"/>
</dbReference>
<dbReference type="GO" id="GO:0016020">
    <property type="term" value="C:membrane"/>
    <property type="evidence" value="ECO:0007669"/>
    <property type="project" value="UniProtKB-SubCell"/>
</dbReference>
<dbReference type="GO" id="GO:0009828">
    <property type="term" value="P:plant-type cell wall loosening"/>
    <property type="evidence" value="ECO:0000250"/>
    <property type="project" value="UniProtKB"/>
</dbReference>
<dbReference type="GO" id="GO:0019953">
    <property type="term" value="P:sexual reproduction"/>
    <property type="evidence" value="ECO:0007669"/>
    <property type="project" value="InterPro"/>
</dbReference>
<dbReference type="CDD" id="cd22275">
    <property type="entry name" value="DPBB_EXPB_N"/>
    <property type="match status" value="1"/>
</dbReference>
<dbReference type="Gene3D" id="2.60.40.760">
    <property type="entry name" value="Expansin, cellulose-binding-like domain"/>
    <property type="match status" value="1"/>
</dbReference>
<dbReference type="Gene3D" id="2.40.40.10">
    <property type="entry name" value="RlpA-like domain"/>
    <property type="match status" value="1"/>
</dbReference>
<dbReference type="InterPro" id="IPR007118">
    <property type="entry name" value="Expan_Lol_pI"/>
</dbReference>
<dbReference type="InterPro" id="IPR007112">
    <property type="entry name" value="Expansin/allergen_DPBB_dom"/>
</dbReference>
<dbReference type="InterPro" id="IPR007117">
    <property type="entry name" value="Expansin_CBD"/>
</dbReference>
<dbReference type="InterPro" id="IPR036749">
    <property type="entry name" value="Expansin_CBD_sf"/>
</dbReference>
<dbReference type="InterPro" id="IPR005795">
    <property type="entry name" value="LolPI"/>
</dbReference>
<dbReference type="InterPro" id="IPR009009">
    <property type="entry name" value="RlpA-like_DPBB"/>
</dbReference>
<dbReference type="InterPro" id="IPR036908">
    <property type="entry name" value="RlpA-like_sf"/>
</dbReference>
<dbReference type="PANTHER" id="PTHR31692">
    <property type="entry name" value="EXPANSIN-B3"/>
    <property type="match status" value="1"/>
</dbReference>
<dbReference type="PANTHER" id="PTHR31692:SF22">
    <property type="entry name" value="EXPANSIN-B5"/>
    <property type="match status" value="1"/>
</dbReference>
<dbReference type="Pfam" id="PF03330">
    <property type="entry name" value="DPBB_1"/>
    <property type="match status" value="1"/>
</dbReference>
<dbReference type="Pfam" id="PF01357">
    <property type="entry name" value="Expansin_C"/>
    <property type="match status" value="1"/>
</dbReference>
<dbReference type="PRINTS" id="PR01225">
    <property type="entry name" value="EXPANSNFAMLY"/>
</dbReference>
<dbReference type="PRINTS" id="PR00829">
    <property type="entry name" value="LOLP1ALLERGN"/>
</dbReference>
<dbReference type="SMART" id="SM00837">
    <property type="entry name" value="DPBB_1"/>
    <property type="match status" value="1"/>
</dbReference>
<dbReference type="SUPFAM" id="SSF50685">
    <property type="entry name" value="Barwin-like endoglucanases"/>
    <property type="match status" value="1"/>
</dbReference>
<dbReference type="SUPFAM" id="SSF49590">
    <property type="entry name" value="PHL pollen allergen"/>
    <property type="match status" value="1"/>
</dbReference>
<dbReference type="PROSITE" id="PS50843">
    <property type="entry name" value="EXPANSIN_CBD"/>
    <property type="match status" value="1"/>
</dbReference>
<dbReference type="PROSITE" id="PS50842">
    <property type="entry name" value="EXPANSIN_EG45"/>
    <property type="match status" value="1"/>
</dbReference>
<gene>
    <name type="primary">EXPB5</name>
    <name type="ordered locus">Os04g0552200</name>
    <name type="ordered locus">LOC_Os04g46650</name>
    <name type="ORF">OSJNBa0010H02.8</name>
</gene>